<protein>
    <recommendedName>
        <fullName evidence="1">Ribosomal RNA small subunit methyltransferase G</fullName>
        <ecNumber evidence="1">2.1.1.-</ecNumber>
    </recommendedName>
    <alternativeName>
        <fullName evidence="1">16S rRNA 7-methylguanosine methyltransferase</fullName>
        <shortName evidence="1">16S rRNA m7G methyltransferase</shortName>
    </alternativeName>
</protein>
<gene>
    <name evidence="1" type="primary">rsmG</name>
    <name type="ordered locus">Amet_4795</name>
</gene>
<keyword id="KW-0963">Cytoplasm</keyword>
<keyword id="KW-0489">Methyltransferase</keyword>
<keyword id="KW-1185">Reference proteome</keyword>
<keyword id="KW-0698">rRNA processing</keyword>
<keyword id="KW-0949">S-adenosyl-L-methionine</keyword>
<keyword id="KW-0808">Transferase</keyword>
<comment type="function">
    <text evidence="1">Specifically methylates the N7 position of a guanine in 16S rRNA.</text>
</comment>
<comment type="subcellular location">
    <subcellularLocation>
        <location evidence="1">Cytoplasm</location>
    </subcellularLocation>
</comment>
<comment type="similarity">
    <text evidence="1">Belongs to the methyltransferase superfamily. RNA methyltransferase RsmG family.</text>
</comment>
<feature type="chain" id="PRO_1000057503" description="Ribosomal RNA small subunit methyltransferase G">
    <location>
        <begin position="1"/>
        <end position="239"/>
    </location>
</feature>
<feature type="binding site" evidence="1">
    <location>
        <position position="78"/>
    </location>
    <ligand>
        <name>S-adenosyl-L-methionine</name>
        <dbReference type="ChEBI" id="CHEBI:59789"/>
    </ligand>
</feature>
<feature type="binding site" evidence="1">
    <location>
        <position position="83"/>
    </location>
    <ligand>
        <name>S-adenosyl-L-methionine</name>
        <dbReference type="ChEBI" id="CHEBI:59789"/>
    </ligand>
</feature>
<feature type="binding site" evidence="1">
    <location>
        <begin position="129"/>
        <end position="130"/>
    </location>
    <ligand>
        <name>S-adenosyl-L-methionine</name>
        <dbReference type="ChEBI" id="CHEBI:59789"/>
    </ligand>
</feature>
<feature type="binding site" evidence="1">
    <location>
        <position position="148"/>
    </location>
    <ligand>
        <name>S-adenosyl-L-methionine</name>
        <dbReference type="ChEBI" id="CHEBI:59789"/>
    </ligand>
</feature>
<dbReference type="EC" id="2.1.1.-" evidence="1"/>
<dbReference type="EMBL" id="CP000724">
    <property type="protein sequence ID" value="ABR50861.1"/>
    <property type="molecule type" value="Genomic_DNA"/>
</dbReference>
<dbReference type="RefSeq" id="WP_012065746.1">
    <property type="nucleotide sequence ID" value="NC_009633.1"/>
</dbReference>
<dbReference type="SMR" id="A6TXE3"/>
<dbReference type="STRING" id="293826.Amet_4795"/>
<dbReference type="KEGG" id="amt:Amet_4795"/>
<dbReference type="eggNOG" id="COG0357">
    <property type="taxonomic scope" value="Bacteria"/>
</dbReference>
<dbReference type="HOGENOM" id="CLU_065341_0_0_9"/>
<dbReference type="OrthoDB" id="9808773at2"/>
<dbReference type="Proteomes" id="UP000001572">
    <property type="component" value="Chromosome"/>
</dbReference>
<dbReference type="GO" id="GO:0005829">
    <property type="term" value="C:cytosol"/>
    <property type="evidence" value="ECO:0007669"/>
    <property type="project" value="TreeGrafter"/>
</dbReference>
<dbReference type="GO" id="GO:0070043">
    <property type="term" value="F:rRNA (guanine-N7-)-methyltransferase activity"/>
    <property type="evidence" value="ECO:0007669"/>
    <property type="project" value="UniProtKB-UniRule"/>
</dbReference>
<dbReference type="CDD" id="cd02440">
    <property type="entry name" value="AdoMet_MTases"/>
    <property type="match status" value="1"/>
</dbReference>
<dbReference type="FunFam" id="3.40.50.150:FF:000041">
    <property type="entry name" value="Ribosomal RNA small subunit methyltransferase G"/>
    <property type="match status" value="1"/>
</dbReference>
<dbReference type="Gene3D" id="3.40.50.150">
    <property type="entry name" value="Vaccinia Virus protein VP39"/>
    <property type="match status" value="1"/>
</dbReference>
<dbReference type="HAMAP" id="MF_00074">
    <property type="entry name" value="16SrRNA_methyltr_G"/>
    <property type="match status" value="1"/>
</dbReference>
<dbReference type="InterPro" id="IPR003682">
    <property type="entry name" value="rRNA_ssu_MeTfrase_G"/>
</dbReference>
<dbReference type="InterPro" id="IPR029063">
    <property type="entry name" value="SAM-dependent_MTases_sf"/>
</dbReference>
<dbReference type="NCBIfam" id="TIGR00138">
    <property type="entry name" value="rsmG_gidB"/>
    <property type="match status" value="1"/>
</dbReference>
<dbReference type="PANTHER" id="PTHR31760">
    <property type="entry name" value="S-ADENOSYL-L-METHIONINE-DEPENDENT METHYLTRANSFERASES SUPERFAMILY PROTEIN"/>
    <property type="match status" value="1"/>
</dbReference>
<dbReference type="PANTHER" id="PTHR31760:SF0">
    <property type="entry name" value="S-ADENOSYL-L-METHIONINE-DEPENDENT METHYLTRANSFERASES SUPERFAMILY PROTEIN"/>
    <property type="match status" value="1"/>
</dbReference>
<dbReference type="Pfam" id="PF02527">
    <property type="entry name" value="GidB"/>
    <property type="match status" value="1"/>
</dbReference>
<dbReference type="PIRSF" id="PIRSF003078">
    <property type="entry name" value="GidB"/>
    <property type="match status" value="1"/>
</dbReference>
<dbReference type="SUPFAM" id="SSF53335">
    <property type="entry name" value="S-adenosyl-L-methionine-dependent methyltransferases"/>
    <property type="match status" value="1"/>
</dbReference>
<accession>A6TXE3</accession>
<reference key="1">
    <citation type="journal article" date="2016" name="Genome Announc.">
        <title>Complete genome sequence of Alkaliphilus metalliredigens strain QYMF, an alkaliphilic and metal-reducing bacterium isolated from borax-contaminated leachate ponds.</title>
        <authorList>
            <person name="Hwang C."/>
            <person name="Copeland A."/>
            <person name="Lucas S."/>
            <person name="Lapidus A."/>
            <person name="Barry K."/>
            <person name="Detter J.C."/>
            <person name="Glavina Del Rio T."/>
            <person name="Hammon N."/>
            <person name="Israni S."/>
            <person name="Dalin E."/>
            <person name="Tice H."/>
            <person name="Pitluck S."/>
            <person name="Chertkov O."/>
            <person name="Brettin T."/>
            <person name="Bruce D."/>
            <person name="Han C."/>
            <person name="Schmutz J."/>
            <person name="Larimer F."/>
            <person name="Land M.L."/>
            <person name="Hauser L."/>
            <person name="Kyrpides N."/>
            <person name="Mikhailova N."/>
            <person name="Ye Q."/>
            <person name="Zhou J."/>
            <person name="Richardson P."/>
            <person name="Fields M.W."/>
        </authorList>
    </citation>
    <scope>NUCLEOTIDE SEQUENCE [LARGE SCALE GENOMIC DNA]</scope>
    <source>
        <strain>QYMF</strain>
    </source>
</reference>
<name>RSMG_ALKMQ</name>
<proteinExistence type="inferred from homology"/>
<evidence type="ECO:0000255" key="1">
    <source>
        <dbReference type="HAMAP-Rule" id="MF_00074"/>
    </source>
</evidence>
<organism>
    <name type="scientific">Alkaliphilus metalliredigens (strain QYMF)</name>
    <dbReference type="NCBI Taxonomy" id="293826"/>
    <lineage>
        <taxon>Bacteria</taxon>
        <taxon>Bacillati</taxon>
        <taxon>Bacillota</taxon>
        <taxon>Clostridia</taxon>
        <taxon>Peptostreptococcales</taxon>
        <taxon>Natronincolaceae</taxon>
        <taxon>Alkaliphilus</taxon>
    </lineage>
</organism>
<sequence length="239" mass="27092">MESKMILKDGCQELGFHIDDNQVQQLLTYKDILLEWNEKMNLTAITEEEEVMVKHFLDSLSCIQSQYLKEEGTMIDVGTGAGFPGIPLKVYFPKLKLTLLDSLNKRVEFLKEVSQELGLEDVNFVHGRAEECGQEETHREQYDYAVARAVASLNVLVEYCLPFVKVGGYFICQKGPQLKEEIQNSQNAITVLGGKVVEQKEITLPFSDITHSLLVIEKIKQTPTKYPRKPGTPSKKPIK</sequence>